<keyword id="KW-0997">Cell inner membrane</keyword>
<keyword id="KW-1003">Cell membrane</keyword>
<keyword id="KW-0406">Ion transport</keyword>
<keyword id="KW-0472">Membrane</keyword>
<keyword id="KW-0630">Potassium</keyword>
<keyword id="KW-0633">Potassium transport</keyword>
<keyword id="KW-0769">Symport</keyword>
<keyword id="KW-0812">Transmembrane</keyword>
<keyword id="KW-1133">Transmembrane helix</keyword>
<keyword id="KW-0813">Transport</keyword>
<feature type="chain" id="PRO_0000279799" description="Probable potassium transport system protein Kup 1">
    <location>
        <begin position="1"/>
        <end position="640"/>
    </location>
</feature>
<feature type="transmembrane region" description="Helical" evidence="1">
    <location>
        <begin position="24"/>
        <end position="44"/>
    </location>
</feature>
<feature type="transmembrane region" description="Helical" evidence="1">
    <location>
        <begin position="67"/>
        <end position="87"/>
    </location>
</feature>
<feature type="transmembrane region" description="Helical" evidence="1">
    <location>
        <begin position="116"/>
        <end position="136"/>
    </location>
</feature>
<feature type="transmembrane region" description="Helical" evidence="1">
    <location>
        <begin position="154"/>
        <end position="174"/>
    </location>
</feature>
<feature type="transmembrane region" description="Helical" evidence="1">
    <location>
        <begin position="186"/>
        <end position="206"/>
    </location>
</feature>
<feature type="transmembrane region" description="Helical" evidence="1">
    <location>
        <begin position="222"/>
        <end position="242"/>
    </location>
</feature>
<feature type="transmembrane region" description="Helical" evidence="1">
    <location>
        <begin position="264"/>
        <end position="284"/>
    </location>
</feature>
<feature type="transmembrane region" description="Helical" evidence="1">
    <location>
        <begin position="296"/>
        <end position="316"/>
    </location>
</feature>
<feature type="transmembrane region" description="Helical" evidence="1">
    <location>
        <begin position="354"/>
        <end position="374"/>
    </location>
</feature>
<feature type="transmembrane region" description="Helical" evidence="1">
    <location>
        <begin position="382"/>
        <end position="402"/>
    </location>
</feature>
<feature type="transmembrane region" description="Helical" evidence="1">
    <location>
        <begin position="411"/>
        <end position="431"/>
    </location>
</feature>
<feature type="transmembrane region" description="Helical" evidence="1">
    <location>
        <begin position="436"/>
        <end position="456"/>
    </location>
</feature>
<dbReference type="EMBL" id="AP007255">
    <property type="protein sequence ID" value="BAE49669.1"/>
    <property type="molecule type" value="Genomic_DNA"/>
</dbReference>
<dbReference type="RefSeq" id="WP_011383307.1">
    <property type="nucleotide sequence ID" value="NC_007626.1"/>
</dbReference>
<dbReference type="STRING" id="342108.amb0865"/>
<dbReference type="KEGG" id="mag:amb0865"/>
<dbReference type="HOGENOM" id="CLU_008142_4_2_5"/>
<dbReference type="OrthoDB" id="9805577at2"/>
<dbReference type="Proteomes" id="UP000007058">
    <property type="component" value="Chromosome"/>
</dbReference>
<dbReference type="GO" id="GO:0005886">
    <property type="term" value="C:plasma membrane"/>
    <property type="evidence" value="ECO:0007669"/>
    <property type="project" value="UniProtKB-SubCell"/>
</dbReference>
<dbReference type="GO" id="GO:0015079">
    <property type="term" value="F:potassium ion transmembrane transporter activity"/>
    <property type="evidence" value="ECO:0007669"/>
    <property type="project" value="UniProtKB-UniRule"/>
</dbReference>
<dbReference type="GO" id="GO:0015293">
    <property type="term" value="F:symporter activity"/>
    <property type="evidence" value="ECO:0007669"/>
    <property type="project" value="UniProtKB-UniRule"/>
</dbReference>
<dbReference type="HAMAP" id="MF_01522">
    <property type="entry name" value="Kup"/>
    <property type="match status" value="1"/>
</dbReference>
<dbReference type="InterPro" id="IPR003855">
    <property type="entry name" value="K+_transporter"/>
</dbReference>
<dbReference type="InterPro" id="IPR053952">
    <property type="entry name" value="K_trans_C"/>
</dbReference>
<dbReference type="InterPro" id="IPR053951">
    <property type="entry name" value="K_trans_N"/>
</dbReference>
<dbReference type="InterPro" id="IPR023051">
    <property type="entry name" value="Kup"/>
</dbReference>
<dbReference type="PANTHER" id="PTHR30540:SF79">
    <property type="entry name" value="LOW AFFINITY POTASSIUM TRANSPORT SYSTEM PROTEIN KUP"/>
    <property type="match status" value="1"/>
</dbReference>
<dbReference type="PANTHER" id="PTHR30540">
    <property type="entry name" value="OSMOTIC STRESS POTASSIUM TRANSPORTER"/>
    <property type="match status" value="1"/>
</dbReference>
<dbReference type="Pfam" id="PF02705">
    <property type="entry name" value="K_trans"/>
    <property type="match status" value="1"/>
</dbReference>
<dbReference type="Pfam" id="PF22776">
    <property type="entry name" value="K_trans_C"/>
    <property type="match status" value="1"/>
</dbReference>
<name>KUP1_PARM1</name>
<accession>Q2W906</accession>
<proteinExistence type="inferred from homology"/>
<evidence type="ECO:0000255" key="1">
    <source>
        <dbReference type="HAMAP-Rule" id="MF_01522"/>
    </source>
</evidence>
<protein>
    <recommendedName>
        <fullName evidence="1">Probable potassium transport system protein Kup 1</fullName>
    </recommendedName>
</protein>
<organism>
    <name type="scientific">Paramagnetospirillum magneticum (strain ATCC 700264 / AMB-1)</name>
    <name type="common">Magnetospirillum magneticum</name>
    <dbReference type="NCBI Taxonomy" id="342108"/>
    <lineage>
        <taxon>Bacteria</taxon>
        <taxon>Pseudomonadati</taxon>
        <taxon>Pseudomonadota</taxon>
        <taxon>Alphaproteobacteria</taxon>
        <taxon>Rhodospirillales</taxon>
        <taxon>Magnetospirillaceae</taxon>
        <taxon>Paramagnetospirillum</taxon>
    </lineage>
</organism>
<reference key="1">
    <citation type="journal article" date="2005" name="DNA Res.">
        <title>Complete genome sequence of the facultative anaerobic magnetotactic bacterium Magnetospirillum sp. strain AMB-1.</title>
        <authorList>
            <person name="Matsunaga T."/>
            <person name="Okamura Y."/>
            <person name="Fukuda Y."/>
            <person name="Wahyudi A.T."/>
            <person name="Murase Y."/>
            <person name="Takeyama H."/>
        </authorList>
    </citation>
    <scope>NUCLEOTIDE SEQUENCE [LARGE SCALE GENOMIC DNA]</scope>
    <source>
        <strain>ATCC 700264 / AMB-1</strain>
    </source>
</reference>
<gene>
    <name evidence="1" type="primary">kup1</name>
    <name type="ordered locus">amb0865</name>
</gene>
<sequence length="640" mass="69097">METPATEKPAGEKSGTEKIGVKRLGALSLAAIGVVYGDIGTSPLYTLKECFDPDHGIPSSPENVIGIASLVFWAIILVVTIKYVLFVMRADNRGEGGILALLALAIRATGGDRGLVGPLVGLGLFGAALFIGDGMITPAISVLSAIEGLEVGTPFFAPYVVPLTLIVLVALFTIQSHGTELVGRLFGPVMVVWFLTIAALGLTEVVGHPHILMAVNPAYGLTFLFTHGWIAFVVMGSVVLAVTGGEALYADMGHFGKLPIQMAWFALVLPALTLNYFGQAALILDNPEAARNPFYMLVPGWGLYPMVILATLATVIASQAVISGVFSLSRQAVQLGYSPRLDIRHTSDEEEGQIYIPRANWGLLLGIVALVVGFKSSSNLAAAYGIAVTGTMAATTILALVVAHRSWNWPLWLCLGLGAVFLAVDLGFLGANLLKVTQGGWFPLAVGLGMLLLMATWRKGRDILSRRLADGALPLDMFMQQQKDSTSILRVRGTAVFMTGGTDTVPIALLHNLKHNKVLHQRVVFLTVITEDIPRVSARDRVVVEGLAEGFYRITVRYGFFQEPDIPKVLRLCKAFGLEFEMMDTSFFLGRETLVPSTHPEMPEWRERLFVIMSRNAVSATDFFRIPAGRVVELGIQVQL</sequence>
<comment type="function">
    <text evidence="1">Transport of potassium into the cell. Likely operates as a K(+):H(+) symporter.</text>
</comment>
<comment type="catalytic activity">
    <reaction evidence="1">
        <text>K(+)(in) + H(+)(in) = K(+)(out) + H(+)(out)</text>
        <dbReference type="Rhea" id="RHEA:28490"/>
        <dbReference type="ChEBI" id="CHEBI:15378"/>
        <dbReference type="ChEBI" id="CHEBI:29103"/>
    </reaction>
    <physiologicalReaction direction="right-to-left" evidence="1">
        <dbReference type="Rhea" id="RHEA:28492"/>
    </physiologicalReaction>
</comment>
<comment type="subcellular location">
    <subcellularLocation>
        <location evidence="1">Cell inner membrane</location>
        <topology evidence="1">Multi-pass membrane protein</topology>
    </subcellularLocation>
</comment>
<comment type="similarity">
    <text evidence="1">Belongs to the HAK/KUP transporter (TC 2.A.72) family.</text>
</comment>